<accession>O34268</accession>
<sequence length="340" mass="37044">MKALVKREASKGIWLEQVPVPTPGPNEVLIKLEKTAICGTDLHIYLWDEWSQRTITPGLTIGHEFVGRVAELGSAVTGYQVGQRVSAEGHIVCGHCRNCRGGRPHLCPNTVGIGVNVNGAFAEYMVMPASNLWPIPDQIPSELAAFFDPYGNAAHCALEFDVIGEDVLITGAGPIGIIAAGICKHIGARNVVVTDVNDFRLKLAADLGATRVVNVSKTSLKDVMADLHMEGFDVGLEMSGNPRAFNDMLDCMYHGGKIAMLGIMPRGAGCDWDKIIFKGLTVQGIYGRKMYETWYKMTQLVLSGFPLQKVLTHQLSIDEFQKGFDLMEEGKAGKVVLSWN</sequence>
<feature type="chain" id="PRO_0000160871" description="L-threonine 3-dehydrogenase">
    <location>
        <begin position="1"/>
        <end position="340"/>
    </location>
</feature>
<feature type="active site" description="Charge relay system" evidence="1">
    <location>
        <position position="40"/>
    </location>
</feature>
<feature type="active site" description="Charge relay system" evidence="1">
    <location>
        <position position="43"/>
    </location>
</feature>
<feature type="binding site" evidence="1">
    <location>
        <position position="38"/>
    </location>
    <ligand>
        <name>Zn(2+)</name>
        <dbReference type="ChEBI" id="CHEBI:29105"/>
        <label>1</label>
        <note>catalytic</note>
    </ligand>
</feature>
<feature type="binding site" evidence="1">
    <location>
        <position position="63"/>
    </location>
    <ligand>
        <name>Zn(2+)</name>
        <dbReference type="ChEBI" id="CHEBI:29105"/>
        <label>1</label>
        <note>catalytic</note>
    </ligand>
</feature>
<feature type="binding site" evidence="1">
    <location>
        <position position="64"/>
    </location>
    <ligand>
        <name>Zn(2+)</name>
        <dbReference type="ChEBI" id="CHEBI:29105"/>
        <label>1</label>
        <note>catalytic</note>
    </ligand>
</feature>
<feature type="binding site" evidence="1">
    <location>
        <position position="93"/>
    </location>
    <ligand>
        <name>Zn(2+)</name>
        <dbReference type="ChEBI" id="CHEBI:29105"/>
        <label>2</label>
    </ligand>
</feature>
<feature type="binding site" evidence="1">
    <location>
        <position position="96"/>
    </location>
    <ligand>
        <name>Zn(2+)</name>
        <dbReference type="ChEBI" id="CHEBI:29105"/>
        <label>2</label>
    </ligand>
</feature>
<feature type="binding site" evidence="1">
    <location>
        <position position="99"/>
    </location>
    <ligand>
        <name>Zn(2+)</name>
        <dbReference type="ChEBI" id="CHEBI:29105"/>
        <label>2</label>
    </ligand>
</feature>
<feature type="binding site" evidence="1">
    <location>
        <position position="107"/>
    </location>
    <ligand>
        <name>Zn(2+)</name>
        <dbReference type="ChEBI" id="CHEBI:29105"/>
        <label>2</label>
    </ligand>
</feature>
<feature type="binding site" evidence="1">
    <location>
        <position position="175"/>
    </location>
    <ligand>
        <name>NAD(+)</name>
        <dbReference type="ChEBI" id="CHEBI:57540"/>
    </ligand>
</feature>
<feature type="binding site" evidence="1">
    <location>
        <position position="195"/>
    </location>
    <ligand>
        <name>NAD(+)</name>
        <dbReference type="ChEBI" id="CHEBI:57540"/>
    </ligand>
</feature>
<feature type="binding site" evidence="1">
    <location>
        <position position="200"/>
    </location>
    <ligand>
        <name>NAD(+)</name>
        <dbReference type="ChEBI" id="CHEBI:57540"/>
    </ligand>
</feature>
<feature type="binding site" evidence="1">
    <location>
        <begin position="261"/>
        <end position="263"/>
    </location>
    <ligand>
        <name>NAD(+)</name>
        <dbReference type="ChEBI" id="CHEBI:57540"/>
    </ligand>
</feature>
<feature type="binding site" evidence="1">
    <location>
        <begin position="285"/>
        <end position="286"/>
    </location>
    <ligand>
        <name>NAD(+)</name>
        <dbReference type="ChEBI" id="CHEBI:57540"/>
    </ligand>
</feature>
<feature type="site" description="Important for catalytic activity for the proton relay mechanism but does not participate directly in the coordination of zinc atom" evidence="1">
    <location>
        <position position="148"/>
    </location>
</feature>
<keyword id="KW-0963">Cytoplasm</keyword>
<keyword id="KW-0479">Metal-binding</keyword>
<keyword id="KW-0520">NAD</keyword>
<keyword id="KW-0560">Oxidoreductase</keyword>
<keyword id="KW-1185">Reference proteome</keyword>
<keyword id="KW-0862">Zinc</keyword>
<evidence type="ECO:0000255" key="1">
    <source>
        <dbReference type="HAMAP-Rule" id="MF_00627"/>
    </source>
</evidence>
<organism>
    <name type="scientific">Xanthomonas campestris pv. campestris (strain ATCC 33913 / DSM 3586 / NCPPB 528 / LMG 568 / P 25)</name>
    <dbReference type="NCBI Taxonomy" id="190485"/>
    <lineage>
        <taxon>Bacteria</taxon>
        <taxon>Pseudomonadati</taxon>
        <taxon>Pseudomonadota</taxon>
        <taxon>Gammaproteobacteria</taxon>
        <taxon>Lysobacterales</taxon>
        <taxon>Lysobacteraceae</taxon>
        <taxon>Xanthomonas</taxon>
    </lineage>
</organism>
<comment type="function">
    <text evidence="1">Catalyzes the NAD(+)-dependent oxidation of L-threonine to 2-amino-3-ketobutyrate.</text>
</comment>
<comment type="catalytic activity">
    <reaction evidence="1">
        <text>L-threonine + NAD(+) = (2S)-2-amino-3-oxobutanoate + NADH + H(+)</text>
        <dbReference type="Rhea" id="RHEA:13161"/>
        <dbReference type="ChEBI" id="CHEBI:15378"/>
        <dbReference type="ChEBI" id="CHEBI:57540"/>
        <dbReference type="ChEBI" id="CHEBI:57926"/>
        <dbReference type="ChEBI" id="CHEBI:57945"/>
        <dbReference type="ChEBI" id="CHEBI:78948"/>
        <dbReference type="EC" id="1.1.1.103"/>
    </reaction>
</comment>
<comment type="cofactor">
    <cofactor evidence="1">
        <name>Zn(2+)</name>
        <dbReference type="ChEBI" id="CHEBI:29105"/>
    </cofactor>
    <text evidence="1">Binds 2 Zn(2+) ions per subunit.</text>
</comment>
<comment type="pathway">
    <text evidence="1">Amino-acid degradation; L-threonine degradation via oxydo-reductase pathway; glycine from L-threonine: step 1/2.</text>
</comment>
<comment type="subunit">
    <text evidence="1">Homotetramer.</text>
</comment>
<comment type="subcellular location">
    <subcellularLocation>
        <location evidence="1">Cytoplasm</location>
    </subcellularLocation>
</comment>
<comment type="similarity">
    <text evidence="1">Belongs to the zinc-containing alcohol dehydrogenase family.</text>
</comment>
<proteinExistence type="inferred from homology"/>
<protein>
    <recommendedName>
        <fullName evidence="1">L-threonine 3-dehydrogenase</fullName>
        <shortName evidence="1">TDH</shortName>
        <ecNumber evidence="1">1.1.1.103</ecNumber>
    </recommendedName>
</protein>
<name>TDH_XANCP</name>
<dbReference type="EC" id="1.1.1.103" evidence="1"/>
<dbReference type="EMBL" id="U96384">
    <property type="protein sequence ID" value="AAC45449.1"/>
    <property type="molecule type" value="Genomic_DNA"/>
</dbReference>
<dbReference type="EMBL" id="AE008922">
    <property type="protein sequence ID" value="AAM40255.1"/>
    <property type="molecule type" value="Genomic_DNA"/>
</dbReference>
<dbReference type="PIR" id="JC5524">
    <property type="entry name" value="JC5524"/>
</dbReference>
<dbReference type="RefSeq" id="NP_636331.1">
    <property type="nucleotide sequence ID" value="NC_003902.1"/>
</dbReference>
<dbReference type="SMR" id="O34268"/>
<dbReference type="STRING" id="190485.XCC0945"/>
<dbReference type="EnsemblBacteria" id="AAM40255">
    <property type="protein sequence ID" value="AAM40255"/>
    <property type="gene ID" value="XCC0945"/>
</dbReference>
<dbReference type="KEGG" id="xcc:XCC0945"/>
<dbReference type="PATRIC" id="fig|190485.4.peg.1018"/>
<dbReference type="eggNOG" id="COG1063">
    <property type="taxonomic scope" value="Bacteria"/>
</dbReference>
<dbReference type="HOGENOM" id="CLU_026673_11_0_6"/>
<dbReference type="OrthoDB" id="9773078at2"/>
<dbReference type="UniPathway" id="UPA00046">
    <property type="reaction ID" value="UER00505"/>
</dbReference>
<dbReference type="Proteomes" id="UP000001010">
    <property type="component" value="Chromosome"/>
</dbReference>
<dbReference type="GO" id="GO:0005737">
    <property type="term" value="C:cytoplasm"/>
    <property type="evidence" value="ECO:0007669"/>
    <property type="project" value="UniProtKB-SubCell"/>
</dbReference>
<dbReference type="GO" id="GO:0008743">
    <property type="term" value="F:L-threonine 3-dehydrogenase activity"/>
    <property type="evidence" value="ECO:0007669"/>
    <property type="project" value="UniProtKB-UniRule"/>
</dbReference>
<dbReference type="GO" id="GO:0008270">
    <property type="term" value="F:zinc ion binding"/>
    <property type="evidence" value="ECO:0007669"/>
    <property type="project" value="UniProtKB-UniRule"/>
</dbReference>
<dbReference type="GO" id="GO:0019518">
    <property type="term" value="P:L-threonine catabolic process to glycine"/>
    <property type="evidence" value="ECO:0007669"/>
    <property type="project" value="UniProtKB-UniPathway"/>
</dbReference>
<dbReference type="Gene3D" id="3.90.180.10">
    <property type="entry name" value="Medium-chain alcohol dehydrogenases, catalytic domain"/>
    <property type="match status" value="1"/>
</dbReference>
<dbReference type="Gene3D" id="3.40.50.720">
    <property type="entry name" value="NAD(P)-binding Rossmann-like Domain"/>
    <property type="match status" value="1"/>
</dbReference>
<dbReference type="HAMAP" id="MF_00627">
    <property type="entry name" value="Thr_dehydrog"/>
    <property type="match status" value="1"/>
</dbReference>
<dbReference type="InterPro" id="IPR013149">
    <property type="entry name" value="ADH-like_C"/>
</dbReference>
<dbReference type="InterPro" id="IPR013154">
    <property type="entry name" value="ADH-like_N"/>
</dbReference>
<dbReference type="InterPro" id="IPR002328">
    <property type="entry name" value="ADH_Zn_CS"/>
</dbReference>
<dbReference type="InterPro" id="IPR011032">
    <property type="entry name" value="GroES-like_sf"/>
</dbReference>
<dbReference type="InterPro" id="IPR004627">
    <property type="entry name" value="L-Threonine_3-DHase"/>
</dbReference>
<dbReference type="InterPro" id="IPR036291">
    <property type="entry name" value="NAD(P)-bd_dom_sf"/>
</dbReference>
<dbReference type="InterPro" id="IPR020843">
    <property type="entry name" value="PKS_ER"/>
</dbReference>
<dbReference type="InterPro" id="IPR050129">
    <property type="entry name" value="Zn_alcohol_dh"/>
</dbReference>
<dbReference type="NCBIfam" id="NF003808">
    <property type="entry name" value="PRK05396.1"/>
    <property type="match status" value="1"/>
</dbReference>
<dbReference type="NCBIfam" id="TIGR00692">
    <property type="entry name" value="tdh"/>
    <property type="match status" value="1"/>
</dbReference>
<dbReference type="PANTHER" id="PTHR43401">
    <property type="entry name" value="L-THREONINE 3-DEHYDROGENASE"/>
    <property type="match status" value="1"/>
</dbReference>
<dbReference type="PANTHER" id="PTHR43401:SF2">
    <property type="entry name" value="L-THREONINE 3-DEHYDROGENASE"/>
    <property type="match status" value="1"/>
</dbReference>
<dbReference type="Pfam" id="PF08240">
    <property type="entry name" value="ADH_N"/>
    <property type="match status" value="1"/>
</dbReference>
<dbReference type="Pfam" id="PF00107">
    <property type="entry name" value="ADH_zinc_N"/>
    <property type="match status" value="1"/>
</dbReference>
<dbReference type="SMART" id="SM00829">
    <property type="entry name" value="PKS_ER"/>
    <property type="match status" value="1"/>
</dbReference>
<dbReference type="SUPFAM" id="SSF50129">
    <property type="entry name" value="GroES-like"/>
    <property type="match status" value="1"/>
</dbReference>
<dbReference type="SUPFAM" id="SSF51735">
    <property type="entry name" value="NAD(P)-binding Rossmann-fold domains"/>
    <property type="match status" value="1"/>
</dbReference>
<dbReference type="PROSITE" id="PS00059">
    <property type="entry name" value="ADH_ZINC"/>
    <property type="match status" value="1"/>
</dbReference>
<gene>
    <name evidence="1" type="primary">tdh</name>
    <name type="ordered locus">XCC0945</name>
</gene>
<reference key="1">
    <citation type="journal article" date="1997" name="Biochem. Biophys. Res. Commun.">
        <title>Molecular characterization of the gene coding for threonine dehydrogenase in Xanthomonas campestris.</title>
        <authorList>
            <person name="Liu Y.S."/>
            <person name="Tseng Y.H."/>
            <person name="Lin J.W."/>
            <person name="Weng S.F."/>
        </authorList>
    </citation>
    <scope>NUCLEOTIDE SEQUENCE [GENOMIC DNA]</scope>
    <source>
        <strain>Xc17</strain>
    </source>
</reference>
<reference key="2">
    <citation type="journal article" date="2002" name="Nature">
        <title>Comparison of the genomes of two Xanthomonas pathogens with differing host specificities.</title>
        <authorList>
            <person name="da Silva A.C.R."/>
            <person name="Ferro J.A."/>
            <person name="Reinach F.C."/>
            <person name="Farah C.S."/>
            <person name="Furlan L.R."/>
            <person name="Quaggio R.B."/>
            <person name="Monteiro-Vitorello C.B."/>
            <person name="Van Sluys M.A."/>
            <person name="Almeida N.F. Jr."/>
            <person name="Alves L.M.C."/>
            <person name="do Amaral A.M."/>
            <person name="Bertolini M.C."/>
            <person name="Camargo L.E.A."/>
            <person name="Camarotte G."/>
            <person name="Cannavan F."/>
            <person name="Cardozo J."/>
            <person name="Chambergo F."/>
            <person name="Ciapina L.P."/>
            <person name="Cicarelli R.M.B."/>
            <person name="Coutinho L.L."/>
            <person name="Cursino-Santos J.R."/>
            <person name="El-Dorry H."/>
            <person name="Faria J.B."/>
            <person name="Ferreira A.J.S."/>
            <person name="Ferreira R.C.C."/>
            <person name="Ferro M.I.T."/>
            <person name="Formighieri E.F."/>
            <person name="Franco M.C."/>
            <person name="Greggio C.C."/>
            <person name="Gruber A."/>
            <person name="Katsuyama A.M."/>
            <person name="Kishi L.T."/>
            <person name="Leite R.P."/>
            <person name="Lemos E.G.M."/>
            <person name="Lemos M.V.F."/>
            <person name="Locali E.C."/>
            <person name="Machado M.A."/>
            <person name="Madeira A.M.B.N."/>
            <person name="Martinez-Rossi N.M."/>
            <person name="Martins E.C."/>
            <person name="Meidanis J."/>
            <person name="Menck C.F.M."/>
            <person name="Miyaki C.Y."/>
            <person name="Moon D.H."/>
            <person name="Moreira L.M."/>
            <person name="Novo M.T.M."/>
            <person name="Okura V.K."/>
            <person name="Oliveira M.C."/>
            <person name="Oliveira V.R."/>
            <person name="Pereira H.A."/>
            <person name="Rossi A."/>
            <person name="Sena J.A.D."/>
            <person name="Silva C."/>
            <person name="de Souza R.F."/>
            <person name="Spinola L.A.F."/>
            <person name="Takita M.A."/>
            <person name="Tamura R.E."/>
            <person name="Teixeira E.C."/>
            <person name="Tezza R.I.D."/>
            <person name="Trindade dos Santos M."/>
            <person name="Truffi D."/>
            <person name="Tsai S.M."/>
            <person name="White F.F."/>
            <person name="Setubal J.C."/>
            <person name="Kitajima J.P."/>
        </authorList>
    </citation>
    <scope>NUCLEOTIDE SEQUENCE [LARGE SCALE GENOMIC DNA]</scope>
    <source>
        <strain>ATCC 33913 / DSM 3586 / NCPPB 528 / LMG 568 / P 25</strain>
    </source>
</reference>